<keyword id="KW-0028">Amino-acid biosynthesis</keyword>
<keyword id="KW-0057">Aromatic amino acid biosynthesis</keyword>
<keyword id="KW-0067">ATP-binding</keyword>
<keyword id="KW-0963">Cytoplasm</keyword>
<keyword id="KW-0418">Kinase</keyword>
<keyword id="KW-0460">Magnesium</keyword>
<keyword id="KW-0479">Metal-binding</keyword>
<keyword id="KW-0547">Nucleotide-binding</keyword>
<keyword id="KW-1185">Reference proteome</keyword>
<keyword id="KW-0808">Transferase</keyword>
<protein>
    <recommendedName>
        <fullName evidence="1">Shikimate kinase</fullName>
        <shortName evidence="1">SK</shortName>
        <ecNumber evidence="1">2.7.1.71</ecNumber>
    </recommendedName>
</protein>
<feature type="chain" id="PRO_1000202903" description="Shikimate kinase">
    <location>
        <begin position="1"/>
        <end position="172"/>
    </location>
</feature>
<feature type="binding site" evidence="1">
    <location>
        <begin position="14"/>
        <end position="19"/>
    </location>
    <ligand>
        <name>ATP</name>
        <dbReference type="ChEBI" id="CHEBI:30616"/>
    </ligand>
</feature>
<feature type="binding site" evidence="1">
    <location>
        <position position="18"/>
    </location>
    <ligand>
        <name>Mg(2+)</name>
        <dbReference type="ChEBI" id="CHEBI:18420"/>
    </ligand>
</feature>
<feature type="binding site" evidence="1">
    <location>
        <position position="36"/>
    </location>
    <ligand>
        <name>substrate</name>
    </ligand>
</feature>
<feature type="binding site" evidence="1">
    <location>
        <position position="60"/>
    </location>
    <ligand>
        <name>substrate</name>
    </ligand>
</feature>
<feature type="binding site" evidence="1">
    <location>
        <position position="82"/>
    </location>
    <ligand>
        <name>substrate</name>
    </ligand>
</feature>
<feature type="binding site" evidence="1">
    <location>
        <position position="120"/>
    </location>
    <ligand>
        <name>ATP</name>
        <dbReference type="ChEBI" id="CHEBI:30616"/>
    </ligand>
</feature>
<feature type="binding site" evidence="1">
    <location>
        <position position="140"/>
    </location>
    <ligand>
        <name>substrate</name>
    </ligand>
</feature>
<comment type="function">
    <text evidence="1">Catalyzes the specific phosphorylation of the 3-hydroxyl group of shikimic acid using ATP as a cosubstrate.</text>
</comment>
<comment type="catalytic activity">
    <reaction evidence="1">
        <text>shikimate + ATP = 3-phosphoshikimate + ADP + H(+)</text>
        <dbReference type="Rhea" id="RHEA:13121"/>
        <dbReference type="ChEBI" id="CHEBI:15378"/>
        <dbReference type="ChEBI" id="CHEBI:30616"/>
        <dbReference type="ChEBI" id="CHEBI:36208"/>
        <dbReference type="ChEBI" id="CHEBI:145989"/>
        <dbReference type="ChEBI" id="CHEBI:456216"/>
        <dbReference type="EC" id="2.7.1.71"/>
    </reaction>
</comment>
<comment type="cofactor">
    <cofactor evidence="1">
        <name>Mg(2+)</name>
        <dbReference type="ChEBI" id="CHEBI:18420"/>
    </cofactor>
    <text evidence="1">Binds 1 Mg(2+) ion per subunit.</text>
</comment>
<comment type="pathway">
    <text evidence="1">Metabolic intermediate biosynthesis; chorismate biosynthesis; chorismate from D-erythrose 4-phosphate and phosphoenolpyruvate: step 5/7.</text>
</comment>
<comment type="subunit">
    <text evidence="1">Monomer.</text>
</comment>
<comment type="subcellular location">
    <subcellularLocation>
        <location evidence="1">Cytoplasm</location>
    </subcellularLocation>
</comment>
<comment type="similarity">
    <text evidence="1">Belongs to the shikimate kinase family.</text>
</comment>
<reference key="1">
    <citation type="submission" date="2009-05" db="EMBL/GenBank/DDBJ databases">
        <title>Complete sequence of Tolumonas auensis DSM 9187.</title>
        <authorList>
            <consortium name="US DOE Joint Genome Institute"/>
            <person name="Lucas S."/>
            <person name="Copeland A."/>
            <person name="Lapidus A."/>
            <person name="Glavina del Rio T."/>
            <person name="Tice H."/>
            <person name="Bruce D."/>
            <person name="Goodwin L."/>
            <person name="Pitluck S."/>
            <person name="Chertkov O."/>
            <person name="Brettin T."/>
            <person name="Detter J.C."/>
            <person name="Han C."/>
            <person name="Larimer F."/>
            <person name="Land M."/>
            <person name="Hauser L."/>
            <person name="Kyrpides N."/>
            <person name="Mikhailova N."/>
            <person name="Spring S."/>
            <person name="Beller H."/>
        </authorList>
    </citation>
    <scope>NUCLEOTIDE SEQUENCE [LARGE SCALE GENOMIC DNA]</scope>
    <source>
        <strain>DSM 9187 / NBRC 110442 / TA 4</strain>
    </source>
</reference>
<sequence length="172" mass="19496">MAEKRNIFLIGPMGAGKSTIGKYLSETLHMDLYDSDQEIERRTGADIAWVFDVEGEEGFRKREEQVISDLSELQGIVLATGGGAIKSPLTRNRLSARGIVVYLETPIEKQLARTQRDKRRPLLRTEEPPREVLTRLADEREPLYREIADYVVRTDELTAKQVATQIVELLGL</sequence>
<proteinExistence type="inferred from homology"/>
<dbReference type="EC" id="2.7.1.71" evidence="1"/>
<dbReference type="EMBL" id="CP001616">
    <property type="protein sequence ID" value="ACQ94211.1"/>
    <property type="molecule type" value="Genomic_DNA"/>
</dbReference>
<dbReference type="RefSeq" id="WP_015879660.1">
    <property type="nucleotide sequence ID" value="NC_012691.1"/>
</dbReference>
<dbReference type="SMR" id="C4LB08"/>
<dbReference type="STRING" id="595494.Tola_2617"/>
<dbReference type="KEGG" id="tau:Tola_2617"/>
<dbReference type="eggNOG" id="COG0703">
    <property type="taxonomic scope" value="Bacteria"/>
</dbReference>
<dbReference type="HOGENOM" id="CLU_057607_2_2_6"/>
<dbReference type="OrthoDB" id="9800332at2"/>
<dbReference type="UniPathway" id="UPA00053">
    <property type="reaction ID" value="UER00088"/>
</dbReference>
<dbReference type="Proteomes" id="UP000009073">
    <property type="component" value="Chromosome"/>
</dbReference>
<dbReference type="GO" id="GO:0005829">
    <property type="term" value="C:cytosol"/>
    <property type="evidence" value="ECO:0007669"/>
    <property type="project" value="TreeGrafter"/>
</dbReference>
<dbReference type="GO" id="GO:0005524">
    <property type="term" value="F:ATP binding"/>
    <property type="evidence" value="ECO:0007669"/>
    <property type="project" value="UniProtKB-UniRule"/>
</dbReference>
<dbReference type="GO" id="GO:0000287">
    <property type="term" value="F:magnesium ion binding"/>
    <property type="evidence" value="ECO:0007669"/>
    <property type="project" value="UniProtKB-UniRule"/>
</dbReference>
<dbReference type="GO" id="GO:0004765">
    <property type="term" value="F:shikimate kinase activity"/>
    <property type="evidence" value="ECO:0007669"/>
    <property type="project" value="UniProtKB-UniRule"/>
</dbReference>
<dbReference type="GO" id="GO:0008652">
    <property type="term" value="P:amino acid biosynthetic process"/>
    <property type="evidence" value="ECO:0007669"/>
    <property type="project" value="UniProtKB-KW"/>
</dbReference>
<dbReference type="GO" id="GO:0009073">
    <property type="term" value="P:aromatic amino acid family biosynthetic process"/>
    <property type="evidence" value="ECO:0007669"/>
    <property type="project" value="UniProtKB-KW"/>
</dbReference>
<dbReference type="GO" id="GO:0009423">
    <property type="term" value="P:chorismate biosynthetic process"/>
    <property type="evidence" value="ECO:0007669"/>
    <property type="project" value="UniProtKB-UniRule"/>
</dbReference>
<dbReference type="CDD" id="cd00464">
    <property type="entry name" value="SK"/>
    <property type="match status" value="1"/>
</dbReference>
<dbReference type="FunFam" id="3.40.50.300:FF:000099">
    <property type="entry name" value="Shikimate kinase 1"/>
    <property type="match status" value="1"/>
</dbReference>
<dbReference type="Gene3D" id="3.40.50.300">
    <property type="entry name" value="P-loop containing nucleotide triphosphate hydrolases"/>
    <property type="match status" value="1"/>
</dbReference>
<dbReference type="HAMAP" id="MF_00109">
    <property type="entry name" value="Shikimate_kinase"/>
    <property type="match status" value="1"/>
</dbReference>
<dbReference type="InterPro" id="IPR027417">
    <property type="entry name" value="P-loop_NTPase"/>
</dbReference>
<dbReference type="InterPro" id="IPR031322">
    <property type="entry name" value="Shikimate/glucono_kinase"/>
</dbReference>
<dbReference type="InterPro" id="IPR000623">
    <property type="entry name" value="Shikimate_kinase/TSH1"/>
</dbReference>
<dbReference type="InterPro" id="IPR023000">
    <property type="entry name" value="Shikimate_kinase_CS"/>
</dbReference>
<dbReference type="NCBIfam" id="NF003456">
    <property type="entry name" value="PRK05057.1"/>
    <property type="match status" value="1"/>
</dbReference>
<dbReference type="PANTHER" id="PTHR21087">
    <property type="entry name" value="SHIKIMATE KINASE"/>
    <property type="match status" value="1"/>
</dbReference>
<dbReference type="PANTHER" id="PTHR21087:SF16">
    <property type="entry name" value="SHIKIMATE KINASE 1, CHLOROPLASTIC"/>
    <property type="match status" value="1"/>
</dbReference>
<dbReference type="Pfam" id="PF01202">
    <property type="entry name" value="SKI"/>
    <property type="match status" value="1"/>
</dbReference>
<dbReference type="PRINTS" id="PR01100">
    <property type="entry name" value="SHIKIMTKNASE"/>
</dbReference>
<dbReference type="SUPFAM" id="SSF52540">
    <property type="entry name" value="P-loop containing nucleoside triphosphate hydrolases"/>
    <property type="match status" value="1"/>
</dbReference>
<dbReference type="PROSITE" id="PS01128">
    <property type="entry name" value="SHIKIMATE_KINASE"/>
    <property type="match status" value="1"/>
</dbReference>
<name>AROK_TOLAT</name>
<gene>
    <name evidence="1" type="primary">aroK</name>
    <name type="ordered locus">Tola_2617</name>
</gene>
<organism>
    <name type="scientific">Tolumonas auensis (strain DSM 9187 / NBRC 110442 / TA 4)</name>
    <dbReference type="NCBI Taxonomy" id="595494"/>
    <lineage>
        <taxon>Bacteria</taxon>
        <taxon>Pseudomonadati</taxon>
        <taxon>Pseudomonadota</taxon>
        <taxon>Gammaproteobacteria</taxon>
        <taxon>Aeromonadales</taxon>
        <taxon>Aeromonadaceae</taxon>
        <taxon>Tolumonas</taxon>
    </lineage>
</organism>
<accession>C4LB08</accession>
<evidence type="ECO:0000255" key="1">
    <source>
        <dbReference type="HAMAP-Rule" id="MF_00109"/>
    </source>
</evidence>